<keyword id="KW-0378">Hydrolase</keyword>
<keyword id="KW-0408">Iron</keyword>
<keyword id="KW-0479">Metal-binding</keyword>
<keyword id="KW-0547">Nucleotide-binding</keyword>
<reference key="1">
    <citation type="journal article" date="1986" name="Mol. Gen. Genet.">
        <title>Analysis of the promoter region in the rrnA operon from a blue-green alga, Anacystis nidulans 6301.</title>
        <authorList>
            <person name="Kumano M."/>
            <person name="Tomioka N."/>
            <person name="Shinozaki K."/>
            <person name="Sugiura M."/>
        </authorList>
    </citation>
    <scope>NUCLEOTIDE SEQUENCE [GENOMIC DNA]</scope>
    <source>
        <strain>ATCC 27144 / PCC 6301 / SAUG 1402/1</strain>
    </source>
</reference>
<reference key="2">
    <citation type="journal article" date="2007" name="Photosyn. Res.">
        <title>Complete nucleotide sequence of the freshwater unicellular cyanobacterium Synechococcus elongatus PCC 6301 chromosome: gene content and organization.</title>
        <authorList>
            <person name="Sugita C."/>
            <person name="Ogata K."/>
            <person name="Shikata M."/>
            <person name="Jikuya H."/>
            <person name="Takano J."/>
            <person name="Furumichi M."/>
            <person name="Kanehisa M."/>
            <person name="Omata T."/>
            <person name="Sugiura M."/>
            <person name="Sugita M."/>
        </authorList>
    </citation>
    <scope>NUCLEOTIDE SEQUENCE [LARGE SCALE GENOMIC DNA]</scope>
    <source>
        <strain>ATCC 27144 / PCC 6301 / SAUG 1402/1</strain>
    </source>
</reference>
<gene>
    <name type="ordered locus">syc0937_d</name>
</gene>
<protein>
    <recommendedName>
        <fullName evidence="1">Probable cyclic nucleotide phosphodiesterase syc0937_d</fullName>
        <ecNumber evidence="1">3.1.4.-</ecNumber>
    </recommendedName>
</protein>
<feature type="chain" id="PRO_0000066100" description="Probable cyclic nucleotide phosphodiesterase syc0937_d">
    <location>
        <begin position="1"/>
        <end position="255"/>
    </location>
</feature>
<feature type="binding site" evidence="2">
    <location>
        <position position="19"/>
    </location>
    <ligand>
        <name>Fe cation</name>
        <dbReference type="ChEBI" id="CHEBI:24875"/>
        <label>1</label>
    </ligand>
</feature>
<feature type="binding site" evidence="1">
    <location>
        <position position="21"/>
    </location>
    <ligand>
        <name>AMP</name>
        <dbReference type="ChEBI" id="CHEBI:456215"/>
    </ligand>
</feature>
<feature type="binding site" evidence="2">
    <location>
        <position position="21"/>
    </location>
    <ligand>
        <name>Fe cation</name>
        <dbReference type="ChEBI" id="CHEBI:24875"/>
        <label>1</label>
    </ligand>
</feature>
<feature type="binding site" evidence="1">
    <location>
        <position position="59"/>
    </location>
    <ligand>
        <name>AMP</name>
        <dbReference type="ChEBI" id="CHEBI:456215"/>
    </ligand>
</feature>
<feature type="binding site" evidence="2">
    <location>
        <position position="59"/>
    </location>
    <ligand>
        <name>Fe cation</name>
        <dbReference type="ChEBI" id="CHEBI:24875"/>
        <label>1</label>
    </ligand>
</feature>
<feature type="binding site" evidence="2">
    <location>
        <position position="59"/>
    </location>
    <ligand>
        <name>Fe cation</name>
        <dbReference type="ChEBI" id="CHEBI:24875"/>
        <label>2</label>
    </ligand>
</feature>
<feature type="binding site" evidence="1">
    <location>
        <begin position="89"/>
        <end position="90"/>
    </location>
    <ligand>
        <name>AMP</name>
        <dbReference type="ChEBI" id="CHEBI:456215"/>
    </ligand>
</feature>
<feature type="binding site" evidence="2">
    <location>
        <position position="89"/>
    </location>
    <ligand>
        <name>Fe cation</name>
        <dbReference type="ChEBI" id="CHEBI:24875"/>
        <label>2</label>
    </ligand>
</feature>
<feature type="binding site" evidence="2">
    <location>
        <position position="157"/>
    </location>
    <ligand>
        <name>Fe cation</name>
        <dbReference type="ChEBI" id="CHEBI:24875"/>
        <label>2</label>
    </ligand>
</feature>
<feature type="binding site" evidence="2">
    <location>
        <position position="196"/>
    </location>
    <ligand>
        <name>Fe cation</name>
        <dbReference type="ChEBI" id="CHEBI:24875"/>
        <label>2</label>
    </ligand>
</feature>
<feature type="binding site" evidence="1">
    <location>
        <position position="198"/>
    </location>
    <ligand>
        <name>AMP</name>
        <dbReference type="ChEBI" id="CHEBI:456215"/>
    </ligand>
</feature>
<feature type="binding site" evidence="2">
    <location>
        <position position="198"/>
    </location>
    <ligand>
        <name>Fe cation</name>
        <dbReference type="ChEBI" id="CHEBI:24875"/>
        <label>1</label>
    </ligand>
</feature>
<feature type="sequence conflict" description="In Ref. 1; CAA27241." evidence="3" ref="1">
    <original>G</original>
    <variation>A</variation>
    <location>
        <position position="44"/>
    </location>
</feature>
<proteinExistence type="inferred from homology"/>
<comment type="cofactor">
    <cofactor evidence="2">
        <name>Fe(2+)</name>
        <dbReference type="ChEBI" id="CHEBI:29033"/>
    </cofactor>
    <text evidence="2">Binds 2 Fe(2+) ions per subunit.</text>
</comment>
<comment type="similarity">
    <text evidence="3">Belongs to the cyclic nucleotide phosphodiesterase class-III family.</text>
</comment>
<comment type="sequence caution" evidence="3">
    <conflict type="frameshift">
        <sequence resource="EMBL-CDS" id="CAA27241"/>
    </conflict>
</comment>
<evidence type="ECO:0000250" key="1">
    <source>
        <dbReference type="UniProtKB" id="P9WP65"/>
    </source>
</evidence>
<evidence type="ECO:0000250" key="2">
    <source>
        <dbReference type="UniProtKB" id="Q6XBH1"/>
    </source>
</evidence>
<evidence type="ECO:0000305" key="3"/>
<name>CNPD3_SYNP6</name>
<sequence length="255" mass="28172">MVEDFAGDAMTLSIAQITDLHLLVDPQAALRGCVTTPRAAAVFGNLKQRSPDLLLLSGDLSEDGSPASYERLRDWVEELGCPAIAIAGNHDQPERLTEICGRSPFMGEPVYSIQGWRIIALDSYQPKRIDGRLRGDQLDWLDQRLGEDSSPTLLMLHHPPVLIGVTKMDAIGLKDGPEFLEVIAHHQQVRLVLSGHAHQAFIQGRGLTTFLGCPATAMQFDQPELPAGWRSLELEPDGSWRSQIHWVDTDSIHFA</sequence>
<accession>P05675</accession>
<accession>P05677</accession>
<accession>Q5N3J3</accession>
<dbReference type="EC" id="3.1.4.-" evidence="1"/>
<dbReference type="EMBL" id="X03538">
    <property type="protein sequence ID" value="CAA27240.1"/>
    <property type="status" value="ALT_FRAME"/>
    <property type="molecule type" value="Genomic_DNA"/>
</dbReference>
<dbReference type="EMBL" id="X03538">
    <property type="protein sequence ID" value="CAA27241.1"/>
    <property type="status" value="ALT_FRAME"/>
    <property type="molecule type" value="Genomic_DNA"/>
</dbReference>
<dbReference type="EMBL" id="AP008231">
    <property type="protein sequence ID" value="BAD79127.1"/>
    <property type="molecule type" value="Genomic_DNA"/>
</dbReference>
<dbReference type="PIR" id="S10913">
    <property type="entry name" value="S10913"/>
</dbReference>
<dbReference type="PIR" id="S10914">
    <property type="entry name" value="S10914"/>
</dbReference>
<dbReference type="SMR" id="P05675"/>
<dbReference type="KEGG" id="syc:syc0937_d"/>
<dbReference type="eggNOG" id="COG1409">
    <property type="taxonomic scope" value="Bacteria"/>
</dbReference>
<dbReference type="Proteomes" id="UP000001175">
    <property type="component" value="Chromosome"/>
</dbReference>
<dbReference type="GO" id="GO:0004115">
    <property type="term" value="F:3',5'-cyclic-AMP phosphodiesterase activity"/>
    <property type="evidence" value="ECO:0007669"/>
    <property type="project" value="UniProtKB-EC"/>
</dbReference>
<dbReference type="GO" id="GO:0046872">
    <property type="term" value="F:metal ion binding"/>
    <property type="evidence" value="ECO:0007669"/>
    <property type="project" value="UniProtKB-KW"/>
</dbReference>
<dbReference type="GO" id="GO:0000166">
    <property type="term" value="F:nucleotide binding"/>
    <property type="evidence" value="ECO:0007669"/>
    <property type="project" value="UniProtKB-KW"/>
</dbReference>
<dbReference type="Gene3D" id="3.60.21.10">
    <property type="match status" value="1"/>
</dbReference>
<dbReference type="InterPro" id="IPR004843">
    <property type="entry name" value="Calcineurin-like_PHP_ApaH"/>
</dbReference>
<dbReference type="InterPro" id="IPR050884">
    <property type="entry name" value="CNP_phosphodiesterase-III"/>
</dbReference>
<dbReference type="InterPro" id="IPR029052">
    <property type="entry name" value="Metallo-depent_PP-like"/>
</dbReference>
<dbReference type="PANTHER" id="PTHR42988:SF2">
    <property type="entry name" value="CYCLIC NUCLEOTIDE PHOSPHODIESTERASE CBUA0032-RELATED"/>
    <property type="match status" value="1"/>
</dbReference>
<dbReference type="PANTHER" id="PTHR42988">
    <property type="entry name" value="PHOSPHOHYDROLASE"/>
    <property type="match status" value="1"/>
</dbReference>
<dbReference type="Pfam" id="PF00149">
    <property type="entry name" value="Metallophos"/>
    <property type="match status" value="1"/>
</dbReference>
<dbReference type="SUPFAM" id="SSF56300">
    <property type="entry name" value="Metallo-dependent phosphatases"/>
    <property type="match status" value="1"/>
</dbReference>
<organism>
    <name type="scientific">Synechococcus sp. (strain ATCC 27144 / PCC 6301 / SAUG 1402/1)</name>
    <name type="common">Anacystis nidulans</name>
    <dbReference type="NCBI Taxonomy" id="269084"/>
    <lineage>
        <taxon>Bacteria</taxon>
        <taxon>Bacillati</taxon>
        <taxon>Cyanobacteriota</taxon>
        <taxon>Cyanophyceae</taxon>
        <taxon>Synechococcales</taxon>
        <taxon>Synechococcaceae</taxon>
        <taxon>Synechococcus</taxon>
    </lineage>
</organism>